<proteinExistence type="inferred from homology"/>
<reference key="1">
    <citation type="journal article" date="2008" name="PLoS ONE">
        <title>Comparative analysis of Acinetobacters: three genomes for three lifestyles.</title>
        <authorList>
            <person name="Vallenet D."/>
            <person name="Nordmann P."/>
            <person name="Barbe V."/>
            <person name="Poirel L."/>
            <person name="Mangenot S."/>
            <person name="Bataille E."/>
            <person name="Dossat C."/>
            <person name="Gas S."/>
            <person name="Kreimeyer A."/>
            <person name="Lenoble P."/>
            <person name="Oztas S."/>
            <person name="Poulain J."/>
            <person name="Segurens B."/>
            <person name="Robert C."/>
            <person name="Abergel C."/>
            <person name="Claverie J.-M."/>
            <person name="Raoult D."/>
            <person name="Medigue C."/>
            <person name="Weissenbach J."/>
            <person name="Cruveiller S."/>
        </authorList>
    </citation>
    <scope>NUCLEOTIDE SEQUENCE [LARGE SCALE GENOMIC DNA]</scope>
    <source>
        <strain>AYE</strain>
    </source>
</reference>
<sequence>MALLIEDKKQIVAEVSEVASKAFAAVVADYQGLSVEQLTTLRVEARKLGVTTRIVRNTLAKRAFQGTQFDILNDNLVGPTILGFSTSEDDMGAAARLFEEFAKTNKAFELKAAAFDGKVYQGADVSVIANLPNQEKALTMLASVLQAPISKLGRLITALKEKNESEAA</sequence>
<gene>
    <name evidence="1" type="primary">rplJ</name>
    <name type="ordered locus">ABAYE3491</name>
</gene>
<feature type="chain" id="PRO_1000120904" description="Large ribosomal subunit protein uL10">
    <location>
        <begin position="1"/>
        <end position="168"/>
    </location>
</feature>
<dbReference type="EMBL" id="CU459141">
    <property type="protein sequence ID" value="CAM88279.1"/>
    <property type="molecule type" value="Genomic_DNA"/>
</dbReference>
<dbReference type="RefSeq" id="WP_001196213.1">
    <property type="nucleotide sequence ID" value="NZ_JBDGFB010000003.1"/>
</dbReference>
<dbReference type="SMR" id="B0VDG4"/>
<dbReference type="EnsemblBacteria" id="CAM88279">
    <property type="protein sequence ID" value="CAM88279"/>
    <property type="gene ID" value="ABAYE3491"/>
</dbReference>
<dbReference type="GeneID" id="92892282"/>
<dbReference type="KEGG" id="aby:ABAYE3491"/>
<dbReference type="HOGENOM" id="CLU_092227_0_2_6"/>
<dbReference type="GO" id="GO:0015934">
    <property type="term" value="C:large ribosomal subunit"/>
    <property type="evidence" value="ECO:0007669"/>
    <property type="project" value="InterPro"/>
</dbReference>
<dbReference type="GO" id="GO:0070180">
    <property type="term" value="F:large ribosomal subunit rRNA binding"/>
    <property type="evidence" value="ECO:0007669"/>
    <property type="project" value="UniProtKB-UniRule"/>
</dbReference>
<dbReference type="GO" id="GO:0003735">
    <property type="term" value="F:structural constituent of ribosome"/>
    <property type="evidence" value="ECO:0007669"/>
    <property type="project" value="InterPro"/>
</dbReference>
<dbReference type="GO" id="GO:0006412">
    <property type="term" value="P:translation"/>
    <property type="evidence" value="ECO:0007669"/>
    <property type="project" value="UniProtKB-UniRule"/>
</dbReference>
<dbReference type="CDD" id="cd05797">
    <property type="entry name" value="Ribosomal_L10"/>
    <property type="match status" value="1"/>
</dbReference>
<dbReference type="Gene3D" id="3.30.70.1730">
    <property type="match status" value="1"/>
</dbReference>
<dbReference type="HAMAP" id="MF_00362">
    <property type="entry name" value="Ribosomal_uL10"/>
    <property type="match status" value="1"/>
</dbReference>
<dbReference type="InterPro" id="IPR001790">
    <property type="entry name" value="Ribosomal_uL10"/>
</dbReference>
<dbReference type="InterPro" id="IPR043141">
    <property type="entry name" value="Ribosomal_uL10-like_sf"/>
</dbReference>
<dbReference type="InterPro" id="IPR022973">
    <property type="entry name" value="Ribosomal_uL10_bac"/>
</dbReference>
<dbReference type="InterPro" id="IPR047865">
    <property type="entry name" value="Ribosomal_uL10_bac_type"/>
</dbReference>
<dbReference type="InterPro" id="IPR002363">
    <property type="entry name" value="Ribosomal_uL10_CS_bac"/>
</dbReference>
<dbReference type="NCBIfam" id="NF000955">
    <property type="entry name" value="PRK00099.1-1"/>
    <property type="match status" value="1"/>
</dbReference>
<dbReference type="PANTHER" id="PTHR11560">
    <property type="entry name" value="39S RIBOSOMAL PROTEIN L10, MITOCHONDRIAL"/>
    <property type="match status" value="1"/>
</dbReference>
<dbReference type="Pfam" id="PF00466">
    <property type="entry name" value="Ribosomal_L10"/>
    <property type="match status" value="1"/>
</dbReference>
<dbReference type="SUPFAM" id="SSF160369">
    <property type="entry name" value="Ribosomal protein L10-like"/>
    <property type="match status" value="1"/>
</dbReference>
<dbReference type="PROSITE" id="PS01109">
    <property type="entry name" value="RIBOSOMAL_L10"/>
    <property type="match status" value="1"/>
</dbReference>
<keyword id="KW-0687">Ribonucleoprotein</keyword>
<keyword id="KW-0689">Ribosomal protein</keyword>
<keyword id="KW-0694">RNA-binding</keyword>
<keyword id="KW-0699">rRNA-binding</keyword>
<protein>
    <recommendedName>
        <fullName evidence="1">Large ribosomal subunit protein uL10</fullName>
    </recommendedName>
    <alternativeName>
        <fullName evidence="2">50S ribosomal protein L10</fullName>
    </alternativeName>
</protein>
<name>RL10_ACIBY</name>
<organism>
    <name type="scientific">Acinetobacter baumannii (strain AYE)</name>
    <dbReference type="NCBI Taxonomy" id="509173"/>
    <lineage>
        <taxon>Bacteria</taxon>
        <taxon>Pseudomonadati</taxon>
        <taxon>Pseudomonadota</taxon>
        <taxon>Gammaproteobacteria</taxon>
        <taxon>Moraxellales</taxon>
        <taxon>Moraxellaceae</taxon>
        <taxon>Acinetobacter</taxon>
        <taxon>Acinetobacter calcoaceticus/baumannii complex</taxon>
    </lineage>
</organism>
<evidence type="ECO:0000255" key="1">
    <source>
        <dbReference type="HAMAP-Rule" id="MF_00362"/>
    </source>
</evidence>
<evidence type="ECO:0000305" key="2"/>
<accession>B0VDG4</accession>
<comment type="function">
    <text evidence="1">Forms part of the ribosomal stalk, playing a central role in the interaction of the ribosome with GTP-bound translation factors.</text>
</comment>
<comment type="subunit">
    <text evidence="1">Part of the ribosomal stalk of the 50S ribosomal subunit. The N-terminus interacts with L11 and the large rRNA to form the base of the stalk. The C-terminus forms an elongated spine to which L12 dimers bind in a sequential fashion forming a multimeric L10(L12)X complex.</text>
</comment>
<comment type="similarity">
    <text evidence="1">Belongs to the universal ribosomal protein uL10 family.</text>
</comment>